<accession>P0CN26</accession>
<accession>Q55JX3</accession>
<accession>Q5K9M7</accession>
<reference key="1">
    <citation type="journal article" date="2005" name="Science">
        <title>The genome of the basidiomycetous yeast and human pathogen Cryptococcus neoformans.</title>
        <authorList>
            <person name="Loftus B.J."/>
            <person name="Fung E."/>
            <person name="Roncaglia P."/>
            <person name="Rowley D."/>
            <person name="Amedeo P."/>
            <person name="Bruno D."/>
            <person name="Vamathevan J."/>
            <person name="Miranda M."/>
            <person name="Anderson I.J."/>
            <person name="Fraser J.A."/>
            <person name="Allen J.E."/>
            <person name="Bosdet I.E."/>
            <person name="Brent M.R."/>
            <person name="Chiu R."/>
            <person name="Doering T.L."/>
            <person name="Donlin M.J."/>
            <person name="D'Souza C.A."/>
            <person name="Fox D.S."/>
            <person name="Grinberg V."/>
            <person name="Fu J."/>
            <person name="Fukushima M."/>
            <person name="Haas B.J."/>
            <person name="Huang J.C."/>
            <person name="Janbon G."/>
            <person name="Jones S.J.M."/>
            <person name="Koo H.L."/>
            <person name="Krzywinski M.I."/>
            <person name="Kwon-Chung K.J."/>
            <person name="Lengeler K.B."/>
            <person name="Maiti R."/>
            <person name="Marra M.A."/>
            <person name="Marra R.E."/>
            <person name="Mathewson C.A."/>
            <person name="Mitchell T.G."/>
            <person name="Pertea M."/>
            <person name="Riggs F.R."/>
            <person name="Salzberg S.L."/>
            <person name="Schein J.E."/>
            <person name="Shvartsbeyn A."/>
            <person name="Shin H."/>
            <person name="Shumway M."/>
            <person name="Specht C.A."/>
            <person name="Suh B.B."/>
            <person name="Tenney A."/>
            <person name="Utterback T.R."/>
            <person name="Wickes B.L."/>
            <person name="Wortman J.R."/>
            <person name="Wye N.H."/>
            <person name="Kronstad J.W."/>
            <person name="Lodge J.K."/>
            <person name="Heitman J."/>
            <person name="Davis R.W."/>
            <person name="Fraser C.M."/>
            <person name="Hyman R.W."/>
        </authorList>
    </citation>
    <scope>NUCLEOTIDE SEQUENCE [LARGE SCALE GENOMIC DNA]</scope>
    <source>
        <strain>JEC21 / ATCC MYA-565</strain>
    </source>
</reference>
<sequence>MPSRGSFRGRGRGSGSGFGSNTRFTGRRRGRGGGGGGGGVAYGIDRRPATSTNQANREDGTAATEKFEEVKVYDEIDEKIGFWRFESVRAEGEEKVGWLVNMHQTLVPSDVHPGGLAAVDYYFIQDDGGSFKVSIPYEPYFYLTCRGGTESIVEEWLLKRYEGIIIRIEREKKWDLSLPNHLLSAPPVFLKLFFHNTADLQTIRRDLLPLARSNSEKFTAVDAYADVVSAEAAANGHGDDENRAWGAEDDTKKKKDKEPSECIIEVREHDLAYHLRVAIDLNIRVGLWYTVTSRTGVITLERIPDRVKRADPVVMAYDIETTKQPLKFPDQQTDQIMMISYMIDGMGYLITNREIVGEDIDDFEYTPKDEYPGEFTVFNEPDEPAVIRRWFEHIRDSKPTVIATYNGDSFDFPFVDARAKIHGISMYEEIGFKPDIEEEYKSRSTMHMDCFRWVKRDSYLPQGSQGLKAVTTAKLGYNPIELDPELMTPYAIEQPQILAQYSVSDAVATYYLYMKYVHPFIFSLCNIIPLSPDEVLRKGTGTLCETLLMVEAYDAHIIMPNRHEDPHGVTYEGHLLASETYVGGHVEALEAGVFRSDIPTHFKIVPSAIQELIDDLDAALRFSLIEEGQVKLEDVENYDEVKQQIQTALETMRDEPNRFDNPLIYHLDVAAMYPNIMLSNRLQPDSVKEEADCAVCDYNRPDKKCDRRMEWAWRGEYFPAKRDEVNMVRYALEQETFPPKRPYDPKRRFVDLTPTEQSALLHKRLGDYSRKVYKKTHDTKIVTKTTIICQRENSFYIDTVRAFRDRRYEYKGLHKTWKKNLDKAFEEGGAVATVDEAKKMIVLYDSLQLAHKCILNSFYGYVMRKGARWYSMEMAGITCLTGATIIQMARQLVEQIGRPLELDTDGIWCMLPGVFPEDFNFKLKNGKKFGISYPCTMLNHLVHAQFTNDQYHELVNNDSGTYNVKKENSIFFELDGPYKAMILPSSKEEDKLLKKRYAVFNPDGSLAELKGFEVKRRGELQMIKIFQSQIFDKFLLGKTTEECYAAVATVADQWLDILQSKASSLHDDELVDLIAENRSMSKTLAEYAGQKSTSISTARRLAEFLGEQMVKDKGLSCRFIISAKPNGAPVTERAVPVAIFTAEEPVKRHYLRKWLKDNSLTDFDLRTILDWDYYTERLGSVIQKLITIPAALQKVPNPVPRIRHPDWLYKRIATKEDKFQQHKITDMFTKLKDMEDLGDGQKKVGPKLAVVRRRNRKEQEKESEVEEVPPEPEYDYAGYIRIMKKKWRKQRQEKARARKSGLRQDGTISSMLRTQTSSMNSKQWDVIQIASTNRPGEFKLWLAIDGTFQSVRLKVPREFYLNFKEDPEPQMLATDRYEAVEVVRTLPRGQPARHLYKLSVDEVLFMEGESHFSTLINNPNVDGAFELQVPLVVRALLSLGTSCALRSNILGGLNRGLDKGFDLVDLERSGNLSRRKYLNEGRGIRYHFLFHAVADQRHIIGLFSPDSTNASIYLVDRAKNRQQLPNPLKFYTDRVERAERGVFSYPDMLDFTTSYHSSESSAFKALGKDLQAINHGLNVIALCSPFEHSYYQAKAPVYSNFPFITYRLGKEEDPGLMWLLQTSRRMIGLYLRLSSWLKEQIQIASHFDVPIGNLGADIAVFLADIEFARRLKQQDMLIWWSSTPRPDLGGSEEDANSSEDLVSPHISNRGCYSSTVLEMEVSDLAINAVLQSALVNEMEGSGTGSLAFDSASHNLDEYAKGAVNTSVMLGDAVLSTQTFGVLKSMLRAWYADKARAHVKGDSLSPAEIVVDQFWRWISSSTSSMFEPALHRFLHGLMRKTFLQLLAEFKRLGTQVVYADFGRVFLLTSKPDAGSAFAFAKYLVAAANSQELFRHLIIDVAQFWNYLAWMDVANFGGVKVSPETAASREPPAKRFEISMDWNIQSFLPGTLQPVFERNVASFIFSLYSAKRSSSDGREPLRVIHSLNIDQPGTEATSTMNPTKEKEKKAASKSISQTLTRRLLSDIAAVKRQQAAVHLEPEEAYTLAFPDLPGARSKRINPTLELIKAITEVYSLASEHSIEVQILKRNLLDLIGVKEFSSDAAFNPPCESIEVPMVICKKCNAIRDVDLCRDPDRLPSVNPDSGEMLEPARKNWVCHKCDSEYDRFQIEQPLIEMVTKTITNYQIQDVICLKCSQTKSDNLAATCKCGGGFRTTSNRNELKTKLKMIKSVCDYHKLPFAGSYVEETLSRW</sequence>
<proteinExistence type="inferred from homology"/>
<protein>
    <recommendedName>
        <fullName>DNA polymerase epsilon catalytic subunit A</fullName>
        <ecNumber evidence="2">2.7.7.7</ecNumber>
    </recommendedName>
    <alternativeName>
        <fullName>DNA polymerase II subunit A</fullName>
    </alternativeName>
</protein>
<evidence type="ECO:0000250" key="1"/>
<evidence type="ECO:0000250" key="2">
    <source>
        <dbReference type="UniProtKB" id="P15436"/>
    </source>
</evidence>
<evidence type="ECO:0000256" key="3">
    <source>
        <dbReference type="SAM" id="MobiDB-lite"/>
    </source>
</evidence>
<evidence type="ECO:0000305" key="4"/>
<gene>
    <name type="primary">POL2</name>
    <name type="ordered locus">CNK01430</name>
</gene>
<comment type="function">
    <text evidence="1">DNA polymerase II participates in chromosomal DNA replication.</text>
</comment>
<comment type="catalytic activity">
    <reaction evidence="2">
        <text>DNA(n) + a 2'-deoxyribonucleoside 5'-triphosphate = DNA(n+1) + diphosphate</text>
        <dbReference type="Rhea" id="RHEA:22508"/>
        <dbReference type="Rhea" id="RHEA-COMP:17339"/>
        <dbReference type="Rhea" id="RHEA-COMP:17340"/>
        <dbReference type="ChEBI" id="CHEBI:33019"/>
        <dbReference type="ChEBI" id="CHEBI:61560"/>
        <dbReference type="ChEBI" id="CHEBI:173112"/>
        <dbReference type="EC" id="2.7.7.7"/>
    </reaction>
</comment>
<comment type="cofactor">
    <cofactor evidence="2">
        <name>[4Fe-4S] cluster</name>
        <dbReference type="ChEBI" id="CHEBI:49883"/>
    </cofactor>
    <text evidence="2">Binds 1 [4Fe-4S] cluster.</text>
</comment>
<comment type="subunit">
    <text evidence="1">Heterotetramer. Consists of 4 subunits: POL2, DPB2, DPB3 and DPB4 (By similarity).</text>
</comment>
<comment type="subcellular location">
    <subcellularLocation>
        <location evidence="1">Nucleus</location>
    </subcellularLocation>
</comment>
<comment type="domain">
    <text evidence="2">The CysA-type zinc finger is required for PCNA-binding.</text>
</comment>
<comment type="domain">
    <text evidence="2">The CysB motif binds 1 4Fe-4S cluster and is required for the formation of polymerase complexes.</text>
</comment>
<comment type="similarity">
    <text evidence="4">Belongs to the DNA polymerase type-B family.</text>
</comment>
<name>DPOE_CRYNJ</name>
<dbReference type="EC" id="2.7.7.7" evidence="2"/>
<dbReference type="EMBL" id="AE017351">
    <property type="protein sequence ID" value="AAW46304.1"/>
    <property type="molecule type" value="Genomic_DNA"/>
</dbReference>
<dbReference type="RefSeq" id="XP_567821.1">
    <property type="nucleotide sequence ID" value="XM_567821.1"/>
</dbReference>
<dbReference type="SMR" id="P0CN26"/>
<dbReference type="FunCoup" id="P0CN26">
    <property type="interactions" value="333"/>
</dbReference>
<dbReference type="STRING" id="214684.P0CN26"/>
<dbReference type="PaxDb" id="214684-P0CN26"/>
<dbReference type="EnsemblFungi" id="AAW46304">
    <property type="protein sequence ID" value="AAW46304"/>
    <property type="gene ID" value="CNK01430"/>
</dbReference>
<dbReference type="GeneID" id="3254656"/>
<dbReference type="KEGG" id="cne:CNK01430"/>
<dbReference type="VEuPathDB" id="FungiDB:CNK01430"/>
<dbReference type="eggNOG" id="KOG1798">
    <property type="taxonomic scope" value="Eukaryota"/>
</dbReference>
<dbReference type="HOGENOM" id="CLU_000556_0_1_1"/>
<dbReference type="InParanoid" id="P0CN26"/>
<dbReference type="OMA" id="MLDQCRY"/>
<dbReference type="OrthoDB" id="10060449at2759"/>
<dbReference type="Proteomes" id="UP000002149">
    <property type="component" value="Chromosome 11"/>
</dbReference>
<dbReference type="GO" id="GO:0008622">
    <property type="term" value="C:epsilon DNA polymerase complex"/>
    <property type="evidence" value="ECO:0000318"/>
    <property type="project" value="GO_Central"/>
</dbReference>
<dbReference type="GO" id="GO:0051539">
    <property type="term" value="F:4 iron, 4 sulfur cluster binding"/>
    <property type="evidence" value="ECO:0007669"/>
    <property type="project" value="UniProtKB-KW"/>
</dbReference>
<dbReference type="GO" id="GO:0003677">
    <property type="term" value="F:DNA binding"/>
    <property type="evidence" value="ECO:0000318"/>
    <property type="project" value="GO_Central"/>
</dbReference>
<dbReference type="GO" id="GO:0003887">
    <property type="term" value="F:DNA-directed DNA polymerase activity"/>
    <property type="evidence" value="ECO:0000318"/>
    <property type="project" value="GO_Central"/>
</dbReference>
<dbReference type="GO" id="GO:0000166">
    <property type="term" value="F:nucleotide binding"/>
    <property type="evidence" value="ECO:0007669"/>
    <property type="project" value="InterPro"/>
</dbReference>
<dbReference type="GO" id="GO:0008310">
    <property type="term" value="F:single-stranded DNA 3'-5' DNA exonuclease activity"/>
    <property type="evidence" value="ECO:0000318"/>
    <property type="project" value="GO_Central"/>
</dbReference>
<dbReference type="GO" id="GO:0008270">
    <property type="term" value="F:zinc ion binding"/>
    <property type="evidence" value="ECO:0007669"/>
    <property type="project" value="UniProtKB-KW"/>
</dbReference>
<dbReference type="GO" id="GO:0006287">
    <property type="term" value="P:base-excision repair, gap-filling"/>
    <property type="evidence" value="ECO:0000318"/>
    <property type="project" value="GO_Central"/>
</dbReference>
<dbReference type="GO" id="GO:0045004">
    <property type="term" value="P:DNA replication proofreading"/>
    <property type="evidence" value="ECO:0000318"/>
    <property type="project" value="GO_Central"/>
</dbReference>
<dbReference type="GO" id="GO:0006272">
    <property type="term" value="P:leading strand elongation"/>
    <property type="evidence" value="ECO:0000318"/>
    <property type="project" value="GO_Central"/>
</dbReference>
<dbReference type="GO" id="GO:0000278">
    <property type="term" value="P:mitotic cell cycle"/>
    <property type="evidence" value="ECO:0000318"/>
    <property type="project" value="GO_Central"/>
</dbReference>
<dbReference type="GO" id="GO:0006297">
    <property type="term" value="P:nucleotide-excision repair, DNA gap filling"/>
    <property type="evidence" value="ECO:0000318"/>
    <property type="project" value="GO_Central"/>
</dbReference>
<dbReference type="CDD" id="cd05779">
    <property type="entry name" value="DNA_polB_epsilon_exo"/>
    <property type="match status" value="1"/>
</dbReference>
<dbReference type="CDD" id="cd05535">
    <property type="entry name" value="POLBc_epsilon"/>
    <property type="match status" value="1"/>
</dbReference>
<dbReference type="FunFam" id="1.10.132.60:FF:000002">
    <property type="entry name" value="DNA polymerase epsilon catalytic subunit"/>
    <property type="match status" value="1"/>
</dbReference>
<dbReference type="FunFam" id="1.10.287.690:FF:000005">
    <property type="entry name" value="DNA polymerase epsilon catalytic subunit"/>
    <property type="match status" value="1"/>
</dbReference>
<dbReference type="FunFam" id="3.30.420.10:FF:000010">
    <property type="entry name" value="DNA polymerase epsilon catalytic subunit"/>
    <property type="match status" value="1"/>
</dbReference>
<dbReference type="FunFam" id="3.90.1600.10:FF:000006">
    <property type="entry name" value="DNA polymerase epsilon catalytic subunit"/>
    <property type="match status" value="1"/>
</dbReference>
<dbReference type="Gene3D" id="1.10.132.60">
    <property type="entry name" value="DNA polymerase family B, C-terminal domain"/>
    <property type="match status" value="1"/>
</dbReference>
<dbReference type="Gene3D" id="3.30.342.10">
    <property type="entry name" value="DNA Polymerase, chain B, domain 1"/>
    <property type="match status" value="1"/>
</dbReference>
<dbReference type="Gene3D" id="3.90.1600.10">
    <property type="entry name" value="Palm domain of DNA polymerase"/>
    <property type="match status" value="1"/>
</dbReference>
<dbReference type="Gene3D" id="3.30.420.10">
    <property type="entry name" value="Ribonuclease H-like superfamily/Ribonuclease H"/>
    <property type="match status" value="1"/>
</dbReference>
<dbReference type="InterPro" id="IPR006172">
    <property type="entry name" value="DNA-dir_DNA_pol_B"/>
</dbReference>
<dbReference type="InterPro" id="IPR006133">
    <property type="entry name" value="DNA-dir_DNA_pol_B_exonuc"/>
</dbReference>
<dbReference type="InterPro" id="IPR043502">
    <property type="entry name" value="DNA/RNA_pol_sf"/>
</dbReference>
<dbReference type="InterPro" id="IPR042087">
    <property type="entry name" value="DNA_pol_B_thumb"/>
</dbReference>
<dbReference type="InterPro" id="IPR013697">
    <property type="entry name" value="DNA_pol_e_suA_C"/>
</dbReference>
<dbReference type="InterPro" id="IPR023211">
    <property type="entry name" value="DNA_pol_palm_dom_sf"/>
</dbReference>
<dbReference type="InterPro" id="IPR029703">
    <property type="entry name" value="POL2"/>
</dbReference>
<dbReference type="InterPro" id="IPR055191">
    <property type="entry name" value="POL2_thumb"/>
</dbReference>
<dbReference type="InterPro" id="IPR012337">
    <property type="entry name" value="RNaseH-like_sf"/>
</dbReference>
<dbReference type="InterPro" id="IPR036397">
    <property type="entry name" value="RNaseH_sf"/>
</dbReference>
<dbReference type="InterPro" id="IPR054475">
    <property type="entry name" value="Znf-DPOE"/>
</dbReference>
<dbReference type="PANTHER" id="PTHR10670">
    <property type="entry name" value="DNA POLYMERASE EPSILON CATALYTIC SUBUNIT A"/>
    <property type="match status" value="1"/>
</dbReference>
<dbReference type="PANTHER" id="PTHR10670:SF0">
    <property type="entry name" value="DNA POLYMERASE EPSILON CATALYTIC SUBUNIT A"/>
    <property type="match status" value="1"/>
</dbReference>
<dbReference type="Pfam" id="PF03104">
    <property type="entry name" value="DNA_pol_B_exo1"/>
    <property type="match status" value="1"/>
</dbReference>
<dbReference type="Pfam" id="PF08490">
    <property type="entry name" value="DUF1744"/>
    <property type="match status" value="1"/>
</dbReference>
<dbReference type="Pfam" id="PF22634">
    <property type="entry name" value="POL2_thumb"/>
    <property type="match status" value="1"/>
</dbReference>
<dbReference type="Pfam" id="PF22912">
    <property type="entry name" value="zf-DPOE"/>
    <property type="match status" value="1"/>
</dbReference>
<dbReference type="Pfam" id="PF23250">
    <property type="entry name" value="zf_DPOE_2"/>
    <property type="match status" value="1"/>
</dbReference>
<dbReference type="SMART" id="SM01159">
    <property type="entry name" value="DUF1744"/>
    <property type="match status" value="1"/>
</dbReference>
<dbReference type="SMART" id="SM00486">
    <property type="entry name" value="POLBc"/>
    <property type="match status" value="1"/>
</dbReference>
<dbReference type="SUPFAM" id="SSF56672">
    <property type="entry name" value="DNA/RNA polymerases"/>
    <property type="match status" value="1"/>
</dbReference>
<dbReference type="SUPFAM" id="SSF53098">
    <property type="entry name" value="Ribonuclease H-like"/>
    <property type="match status" value="1"/>
</dbReference>
<feature type="chain" id="PRO_0000046460" description="DNA polymerase epsilon catalytic subunit A">
    <location>
        <begin position="1"/>
        <end position="2250"/>
    </location>
</feature>
<feature type="zinc finger region" description="CysA-type" evidence="2">
    <location>
        <begin position="2118"/>
        <end position="2159"/>
    </location>
</feature>
<feature type="region of interest" description="Disordered" evidence="3">
    <location>
        <begin position="1"/>
        <end position="63"/>
    </location>
</feature>
<feature type="region of interest" description="Disordered" evidence="3">
    <location>
        <begin position="235"/>
        <end position="259"/>
    </location>
</feature>
<feature type="region of interest" description="Disordered" evidence="3">
    <location>
        <begin position="1990"/>
        <end position="2010"/>
    </location>
</feature>
<feature type="short sequence motif" description="CysB motif" evidence="2">
    <location>
        <begin position="2190"/>
        <end position="2207"/>
    </location>
</feature>
<feature type="compositionally biased region" description="Gly residues" evidence="3">
    <location>
        <begin position="32"/>
        <end position="41"/>
    </location>
</feature>
<feature type="compositionally biased region" description="Basic and acidic residues" evidence="3">
    <location>
        <begin position="249"/>
        <end position="259"/>
    </location>
</feature>
<feature type="compositionally biased region" description="Polar residues" evidence="3">
    <location>
        <begin position="1990"/>
        <end position="2000"/>
    </location>
</feature>
<feature type="binding site" evidence="2">
    <location>
        <position position="2118"/>
    </location>
    <ligand>
        <name>Zn(2+)</name>
        <dbReference type="ChEBI" id="CHEBI:29105"/>
    </ligand>
</feature>
<feature type="binding site" evidence="2">
    <location>
        <position position="2121"/>
    </location>
    <ligand>
        <name>Zn(2+)</name>
        <dbReference type="ChEBI" id="CHEBI:29105"/>
    </ligand>
</feature>
<feature type="binding site" evidence="2">
    <location>
        <position position="2156"/>
    </location>
    <ligand>
        <name>Zn(2+)</name>
        <dbReference type="ChEBI" id="CHEBI:29105"/>
    </ligand>
</feature>
<feature type="binding site" evidence="2">
    <location>
        <position position="2159"/>
    </location>
    <ligand>
        <name>Zn(2+)</name>
        <dbReference type="ChEBI" id="CHEBI:29105"/>
    </ligand>
</feature>
<feature type="binding site" evidence="2">
    <location>
        <position position="2190"/>
    </location>
    <ligand>
        <name>[4Fe-4S] cluster</name>
        <dbReference type="ChEBI" id="CHEBI:49883"/>
    </ligand>
</feature>
<feature type="binding site" evidence="2">
    <location>
        <position position="2193"/>
    </location>
    <ligand>
        <name>[4Fe-4S] cluster</name>
        <dbReference type="ChEBI" id="CHEBI:49883"/>
    </ligand>
</feature>
<feature type="binding site" evidence="2">
    <location>
        <position position="2205"/>
    </location>
    <ligand>
        <name>[4Fe-4S] cluster</name>
        <dbReference type="ChEBI" id="CHEBI:49883"/>
    </ligand>
</feature>
<feature type="binding site" evidence="2">
    <location>
        <position position="2207"/>
    </location>
    <ligand>
        <name>[4Fe-4S] cluster</name>
        <dbReference type="ChEBI" id="CHEBI:49883"/>
    </ligand>
</feature>
<organism>
    <name type="scientific">Cryptococcus neoformans var. neoformans serotype D (strain JEC21 / ATCC MYA-565)</name>
    <name type="common">Filobasidiella neoformans</name>
    <dbReference type="NCBI Taxonomy" id="214684"/>
    <lineage>
        <taxon>Eukaryota</taxon>
        <taxon>Fungi</taxon>
        <taxon>Dikarya</taxon>
        <taxon>Basidiomycota</taxon>
        <taxon>Agaricomycotina</taxon>
        <taxon>Tremellomycetes</taxon>
        <taxon>Tremellales</taxon>
        <taxon>Cryptococcaceae</taxon>
        <taxon>Cryptococcus</taxon>
        <taxon>Cryptococcus neoformans species complex</taxon>
    </lineage>
</organism>
<keyword id="KW-0004">4Fe-4S</keyword>
<keyword id="KW-0235">DNA replication</keyword>
<keyword id="KW-0238">DNA-binding</keyword>
<keyword id="KW-0239">DNA-directed DNA polymerase</keyword>
<keyword id="KW-0408">Iron</keyword>
<keyword id="KW-0411">Iron-sulfur</keyword>
<keyword id="KW-0479">Metal-binding</keyword>
<keyword id="KW-0548">Nucleotidyltransferase</keyword>
<keyword id="KW-0539">Nucleus</keyword>
<keyword id="KW-1185">Reference proteome</keyword>
<keyword id="KW-0808">Transferase</keyword>
<keyword id="KW-0862">Zinc</keyword>
<keyword id="KW-0863">Zinc-finger</keyword>